<keyword id="KW-0963">Cytoplasm</keyword>
<keyword id="KW-0235">DNA replication</keyword>
<keyword id="KW-0239">DNA-directed DNA polymerase</keyword>
<keyword id="KW-0548">Nucleotidyltransferase</keyword>
<keyword id="KW-1185">Reference proteome</keyword>
<keyword id="KW-0808">Transferase</keyword>
<accession>Q8X8X5</accession>
<accession>Q7AHM0</accession>
<evidence type="ECO:0000250" key="1"/>
<evidence type="ECO:0000305" key="2"/>
<protein>
    <recommendedName>
        <fullName>DNA polymerase III subunit alpha</fullName>
        <ecNumber>2.7.7.7</ecNumber>
    </recommendedName>
</protein>
<proteinExistence type="inferred from homology"/>
<feature type="chain" id="PRO_0000239871" description="DNA polymerase III subunit alpha">
    <location>
        <begin position="1"/>
        <end position="1160"/>
    </location>
</feature>
<name>DPO3A_ECO57</name>
<dbReference type="EC" id="2.7.7.7"/>
<dbReference type="EMBL" id="AE005174">
    <property type="protein sequence ID" value="AAG54486.1"/>
    <property type="molecule type" value="Genomic_DNA"/>
</dbReference>
<dbReference type="EMBL" id="BA000007">
    <property type="protein sequence ID" value="BAB33609.1"/>
    <property type="molecule type" value="Genomic_DNA"/>
</dbReference>
<dbReference type="PIR" id="B85503">
    <property type="entry name" value="B85503"/>
</dbReference>
<dbReference type="PIR" id="B90652">
    <property type="entry name" value="B90652"/>
</dbReference>
<dbReference type="RefSeq" id="NP_308213.1">
    <property type="nucleotide sequence ID" value="NC_002695.1"/>
</dbReference>
<dbReference type="RefSeq" id="WP_001294772.1">
    <property type="nucleotide sequence ID" value="NZ_VOAI01000002.1"/>
</dbReference>
<dbReference type="SMR" id="Q8X8X5"/>
<dbReference type="STRING" id="155864.Z0196"/>
<dbReference type="GeneID" id="913906"/>
<dbReference type="KEGG" id="ece:Z0196"/>
<dbReference type="KEGG" id="ecs:ECs_0186"/>
<dbReference type="PATRIC" id="fig|386585.9.peg.289"/>
<dbReference type="eggNOG" id="COG0587">
    <property type="taxonomic scope" value="Bacteria"/>
</dbReference>
<dbReference type="HOGENOM" id="CLU_001600_0_2_6"/>
<dbReference type="OMA" id="DFCMDGR"/>
<dbReference type="Proteomes" id="UP000000558">
    <property type="component" value="Chromosome"/>
</dbReference>
<dbReference type="Proteomes" id="UP000002519">
    <property type="component" value="Chromosome"/>
</dbReference>
<dbReference type="GO" id="GO:0005737">
    <property type="term" value="C:cytoplasm"/>
    <property type="evidence" value="ECO:0007669"/>
    <property type="project" value="UniProtKB-SubCell"/>
</dbReference>
<dbReference type="GO" id="GO:0008408">
    <property type="term" value="F:3'-5' exonuclease activity"/>
    <property type="evidence" value="ECO:0007669"/>
    <property type="project" value="InterPro"/>
</dbReference>
<dbReference type="GO" id="GO:0003887">
    <property type="term" value="F:DNA-directed DNA polymerase activity"/>
    <property type="evidence" value="ECO:0007669"/>
    <property type="project" value="UniProtKB-KW"/>
</dbReference>
<dbReference type="GO" id="GO:0003676">
    <property type="term" value="F:nucleic acid binding"/>
    <property type="evidence" value="ECO:0007669"/>
    <property type="project" value="InterPro"/>
</dbReference>
<dbReference type="GO" id="GO:0006260">
    <property type="term" value="P:DNA replication"/>
    <property type="evidence" value="ECO:0007669"/>
    <property type="project" value="UniProtKB-KW"/>
</dbReference>
<dbReference type="CDD" id="cd04485">
    <property type="entry name" value="DnaE_OBF"/>
    <property type="match status" value="1"/>
</dbReference>
<dbReference type="CDD" id="cd07433">
    <property type="entry name" value="PHP_PolIIIA_DnaE1"/>
    <property type="match status" value="1"/>
</dbReference>
<dbReference type="FunFam" id="1.10.10.1600:FF:000001">
    <property type="entry name" value="DNA polymerase III subunit alpha"/>
    <property type="match status" value="1"/>
</dbReference>
<dbReference type="FunFam" id="1.10.150.870:FF:000001">
    <property type="entry name" value="DNA polymerase III subunit alpha"/>
    <property type="match status" value="1"/>
</dbReference>
<dbReference type="FunFam" id="2.40.50.140:FF:000106">
    <property type="entry name" value="DNA polymerase III subunit alpha"/>
    <property type="match status" value="1"/>
</dbReference>
<dbReference type="FunFam" id="3.20.20.140:FF:000028">
    <property type="entry name" value="DNA polymerase III subunit alpha"/>
    <property type="match status" value="1"/>
</dbReference>
<dbReference type="Gene3D" id="1.10.150.870">
    <property type="match status" value="1"/>
</dbReference>
<dbReference type="Gene3D" id="1.10.10.1600">
    <property type="entry name" value="Bacterial DNA polymerase III alpha subunit, thumb domain"/>
    <property type="match status" value="1"/>
</dbReference>
<dbReference type="Gene3D" id="3.20.20.140">
    <property type="entry name" value="Metal-dependent hydrolases"/>
    <property type="match status" value="1"/>
</dbReference>
<dbReference type="Gene3D" id="2.40.50.140">
    <property type="entry name" value="Nucleic acid-binding proteins"/>
    <property type="match status" value="1"/>
</dbReference>
<dbReference type="InterPro" id="IPR011708">
    <property type="entry name" value="DNA_pol3_alpha_NTPase_dom"/>
</dbReference>
<dbReference type="InterPro" id="IPR041931">
    <property type="entry name" value="DNA_pol3_alpha_thumb_dom"/>
</dbReference>
<dbReference type="InterPro" id="IPR040982">
    <property type="entry name" value="DNA_pol3_finger"/>
</dbReference>
<dbReference type="InterPro" id="IPR048472">
    <property type="entry name" value="DNA_pol_IIIA_C"/>
</dbReference>
<dbReference type="InterPro" id="IPR004805">
    <property type="entry name" value="DnaE2/DnaE/PolC"/>
</dbReference>
<dbReference type="InterPro" id="IPR029460">
    <property type="entry name" value="DNAPol_HHH"/>
</dbReference>
<dbReference type="InterPro" id="IPR012340">
    <property type="entry name" value="NA-bd_OB-fold"/>
</dbReference>
<dbReference type="InterPro" id="IPR004365">
    <property type="entry name" value="NA-bd_OB_tRNA"/>
</dbReference>
<dbReference type="InterPro" id="IPR004013">
    <property type="entry name" value="PHP_dom"/>
</dbReference>
<dbReference type="InterPro" id="IPR003141">
    <property type="entry name" value="Pol/His_phosphatase_N"/>
</dbReference>
<dbReference type="InterPro" id="IPR016195">
    <property type="entry name" value="Pol/histidinol_Pase-like"/>
</dbReference>
<dbReference type="InterPro" id="IPR049821">
    <property type="entry name" value="PolIIIA_DnaE1_PHP"/>
</dbReference>
<dbReference type="NCBIfam" id="TIGR00594">
    <property type="entry name" value="polc"/>
    <property type="match status" value="1"/>
</dbReference>
<dbReference type="NCBIfam" id="NF004226">
    <property type="entry name" value="PRK05673.1"/>
    <property type="match status" value="1"/>
</dbReference>
<dbReference type="PANTHER" id="PTHR32294">
    <property type="entry name" value="DNA POLYMERASE III SUBUNIT ALPHA"/>
    <property type="match status" value="1"/>
</dbReference>
<dbReference type="PANTHER" id="PTHR32294:SF0">
    <property type="entry name" value="DNA POLYMERASE III SUBUNIT ALPHA"/>
    <property type="match status" value="1"/>
</dbReference>
<dbReference type="Pfam" id="PF07733">
    <property type="entry name" value="DNA_pol3_alpha"/>
    <property type="match status" value="1"/>
</dbReference>
<dbReference type="Pfam" id="PF17657">
    <property type="entry name" value="DNA_pol3_finger"/>
    <property type="match status" value="1"/>
</dbReference>
<dbReference type="Pfam" id="PF20914">
    <property type="entry name" value="DNA_pol_IIIA_C"/>
    <property type="match status" value="1"/>
</dbReference>
<dbReference type="Pfam" id="PF14579">
    <property type="entry name" value="HHH_6"/>
    <property type="match status" value="1"/>
</dbReference>
<dbReference type="Pfam" id="PF02811">
    <property type="entry name" value="PHP"/>
    <property type="match status" value="1"/>
</dbReference>
<dbReference type="Pfam" id="PF01336">
    <property type="entry name" value="tRNA_anti-codon"/>
    <property type="match status" value="1"/>
</dbReference>
<dbReference type="SMART" id="SM00481">
    <property type="entry name" value="POLIIIAc"/>
    <property type="match status" value="1"/>
</dbReference>
<dbReference type="SUPFAM" id="SSF89550">
    <property type="entry name" value="PHP domain-like"/>
    <property type="match status" value="1"/>
</dbReference>
<gene>
    <name type="primary">dnaE</name>
    <name type="ordered locus">Z0196</name>
    <name type="ordered locus">ECs0186</name>
</gene>
<sequence>MSEPRFVHLRVHSDYSMIDGLAKTAPLVKKAAALGMPALAITDFTNLCGLVKFYGAGHGAGIKPIVGADFNVQCDLLGDELTHLTVLAANNTGYQNLTLLISKAYQRGYGAAGPIIDRDWLIELNEGLILLSGGRMGDVGRSLLRGNSALVDECVAFYEEHFPDRYFLELIRTGRPDEESYLHAAVELAEARGLPVVATNDVRFIDSSDFDAHEIRVAIHDGFTLDDPKRPRNYSPQQYMRSEEEMCELFADIPEALANTVEIAKRCNVTVRLGEYFLPQFPTGDMSTEDYLVKRAKEGLEERLAFLFPDEEERVKRRPEYDERLETELQVINQMGFPGYFLIVMEFIQWSKDNGVPVGPGRGSGAGSLVAYALKITDLDPLEFDLLFERFLNPERVSMPDFDVDFCMEKRDQVIEHVADMYGRDAVSQIITFGTMAAKAVIRDVGRVLGHPYGFVDRISKLIPPDPGMTLAKAFEAEPQLPEIYEADEEVKALIDMARKLEGVTRNAGKHAGGVVIAPTKITDFAPLYCDEEGKHPVTQFDKSDVEYAGLVKFDFLGLRTLTIINWALEMINKRRAKNGEPPLDIAAIPLDDKKSFDMLQRSETTAVFQLESRGMKDLIKRLQPDCFEDMIALVALFRPGPLQSGMVDNFIDRKHGREEISYPDVQWQHESLKPVLEPTYGIILYQEQVMQIAQVLSGYTLGGADMLRRAMGKKKPEEMAKQRSVFAEGAEKNGINAELAMKIFDLVEKFAGYGFNKSHSAAYALVSYQTLWLKAHYPAEFMAAVMTADMDNTEKVVGLVDECWRMGLKILPPDINSGLYHFHVNDDGEIVYGIGAIKGVGEGPIEAIIEARNKGGYFRELFDLCARTDTKKLNRRVLEKLIMSGAFDRLGPHRAALMNSLGDALKAADQHAKAEAIGQADMFGVLAEEPEQIEQSYASCQPWPEQVVLDGERETLGLYLTGHPINQYLKEIERYVGGVRLKDMHPTERGKVITAAGLVVAARVMVTKRGNRIGICTLDDRSGRLEVMLFTDALDKYQHLLEKDRILIVSGQVSFDDFSGGLKMTAREVMDIDEAREKYARGLAISLTDRQIDDQLLNRLRQSLEPHRSGTIPVHLYYQRADARARLRFGATWRVSPSDRLLNDLRGLIGSEQVELEFD</sequence>
<organism>
    <name type="scientific">Escherichia coli O157:H7</name>
    <dbReference type="NCBI Taxonomy" id="83334"/>
    <lineage>
        <taxon>Bacteria</taxon>
        <taxon>Pseudomonadati</taxon>
        <taxon>Pseudomonadota</taxon>
        <taxon>Gammaproteobacteria</taxon>
        <taxon>Enterobacterales</taxon>
        <taxon>Enterobacteriaceae</taxon>
        <taxon>Escherichia</taxon>
    </lineage>
</organism>
<comment type="function">
    <text>DNA polymerase III is a complex, multichain enzyme responsible for most of the replicative synthesis in bacteria. This DNA polymerase also exhibits 3' to 5' exonuclease activity. The alpha chain is the DNA polymerase.</text>
</comment>
<comment type="catalytic activity">
    <reaction>
        <text>DNA(n) + a 2'-deoxyribonucleoside 5'-triphosphate = DNA(n+1) + diphosphate</text>
        <dbReference type="Rhea" id="RHEA:22508"/>
        <dbReference type="Rhea" id="RHEA-COMP:17339"/>
        <dbReference type="Rhea" id="RHEA-COMP:17340"/>
        <dbReference type="ChEBI" id="CHEBI:33019"/>
        <dbReference type="ChEBI" id="CHEBI:61560"/>
        <dbReference type="ChEBI" id="CHEBI:173112"/>
        <dbReference type="EC" id="2.7.7.7"/>
    </reaction>
</comment>
<comment type="subunit">
    <text evidence="1">The DNA polymerase holoenzyme is a complex that contains 10 different types of subunits. These subunits are organized into 3 functionally essential subassemblies: the pol III core, the beta sliding clamp processivity factor and the clamp-loading complex. The pol III core (subunits alpha,epsilon and theta) contains the polymerase and the 3'-5' exonuclease proofreading activities. The polymerase is tethered to the template via the sliding clamp processivity factor. The clamp-loading complex assembles the beta processivity factor onto the primer template and plays a central role in the organization and communication at the replication fork. This complex contains delta, delta', psi and chi, and copies of either or both of two different DnaX proteins, gamma and tau. The composition of the holoenzyme is, therefore: (alpha,epsilon,theta)[2]-(gamma/tau)[3]-delta,delta', psi,chi-beta[4] (By similarity).</text>
</comment>
<comment type="subcellular location">
    <subcellularLocation>
        <location evidence="1">Cytoplasm</location>
    </subcellularLocation>
</comment>
<comment type="similarity">
    <text evidence="2">Belongs to the DNA polymerase type-C family. DnaE subfamily.</text>
</comment>
<reference key="1">
    <citation type="journal article" date="2001" name="Nature">
        <title>Genome sequence of enterohaemorrhagic Escherichia coli O157:H7.</title>
        <authorList>
            <person name="Perna N.T."/>
            <person name="Plunkett G. III"/>
            <person name="Burland V."/>
            <person name="Mau B."/>
            <person name="Glasner J.D."/>
            <person name="Rose D.J."/>
            <person name="Mayhew G.F."/>
            <person name="Evans P.S."/>
            <person name="Gregor J."/>
            <person name="Kirkpatrick H.A."/>
            <person name="Posfai G."/>
            <person name="Hackett J."/>
            <person name="Klink S."/>
            <person name="Boutin A."/>
            <person name="Shao Y."/>
            <person name="Miller L."/>
            <person name="Grotbeck E.J."/>
            <person name="Davis N.W."/>
            <person name="Lim A."/>
            <person name="Dimalanta E.T."/>
            <person name="Potamousis K."/>
            <person name="Apodaca J."/>
            <person name="Anantharaman T.S."/>
            <person name="Lin J."/>
            <person name="Yen G."/>
            <person name="Schwartz D.C."/>
            <person name="Welch R.A."/>
            <person name="Blattner F.R."/>
        </authorList>
    </citation>
    <scope>NUCLEOTIDE SEQUENCE [LARGE SCALE GENOMIC DNA]</scope>
    <source>
        <strain>O157:H7 / EDL933 / ATCC 700927 / EHEC</strain>
    </source>
</reference>
<reference key="2">
    <citation type="journal article" date="2001" name="DNA Res.">
        <title>Complete genome sequence of enterohemorrhagic Escherichia coli O157:H7 and genomic comparison with a laboratory strain K-12.</title>
        <authorList>
            <person name="Hayashi T."/>
            <person name="Makino K."/>
            <person name="Ohnishi M."/>
            <person name="Kurokawa K."/>
            <person name="Ishii K."/>
            <person name="Yokoyama K."/>
            <person name="Han C.-G."/>
            <person name="Ohtsubo E."/>
            <person name="Nakayama K."/>
            <person name="Murata T."/>
            <person name="Tanaka M."/>
            <person name="Tobe T."/>
            <person name="Iida T."/>
            <person name="Takami H."/>
            <person name="Honda T."/>
            <person name="Sasakawa C."/>
            <person name="Ogasawara N."/>
            <person name="Yasunaga T."/>
            <person name="Kuhara S."/>
            <person name="Shiba T."/>
            <person name="Hattori M."/>
            <person name="Shinagawa H."/>
        </authorList>
    </citation>
    <scope>NUCLEOTIDE SEQUENCE [LARGE SCALE GENOMIC DNA]</scope>
    <source>
        <strain>O157:H7 / Sakai / RIMD 0509952 / EHEC</strain>
    </source>
</reference>